<accession>Q9NY30</accession>
<accession>Q8NEH7</accession>
<feature type="chain" id="PRO_0000143810" description="Protein BTG4">
    <location>
        <begin position="1"/>
        <end position="223"/>
    </location>
</feature>
<feature type="splice variant" id="VSP_053851" description="In isoform 2." evidence="3">
    <original>ENLKQPFQSWLQIPRKKNVVDGRVGLLGNTYHGSQKHPKCYRPAMHRLDRIL</original>
    <variation>KSVPVLFYTFFLSNSKKNALIMKTKKQKNMERTKL</variation>
    <location>
        <begin position="172"/>
        <end position="223"/>
    </location>
</feature>
<feature type="sequence variant" id="VAR_084759" description="In OZEMA8." evidence="2">
    <location>
        <begin position="25"/>
        <end position="223"/>
    </location>
</feature>
<feature type="sequence variant" id="VAR_084760" description="In OZEMA8; loss-of-function variant resulting in impaired maternal mRNA decay in fertilized oocytes from the affected individual; abolishes the interaction with CNOT7; dbSNP:rs1865879702." evidence="2">
    <original>A</original>
    <variation>T</variation>
    <location>
        <position position="56"/>
    </location>
</feature>
<sequence>MRDEIATTVFFVTRLVKKHDKLSKQQIEDFAEKLMTILFETYRSHWHSDCPSKGQAFRCIRINNNQNKDPILERACVESNVDFSHLGLPKEMTIWVDPFEVCCRYGEKNHPFTVASFKGRWEEWELYQQISYAVSRASSDVSSGTSCDEESCSKEPRVIPKVSNPKSIYQVENLKQPFQSWLQIPRKKNVVDGRVGLLGNTYHGSQKHPKCYRPAMHRLDRIL</sequence>
<organism>
    <name type="scientific">Homo sapiens</name>
    <name type="common">Human</name>
    <dbReference type="NCBI Taxonomy" id="9606"/>
    <lineage>
        <taxon>Eukaryota</taxon>
        <taxon>Metazoa</taxon>
        <taxon>Chordata</taxon>
        <taxon>Craniata</taxon>
        <taxon>Vertebrata</taxon>
        <taxon>Euteleostomi</taxon>
        <taxon>Mammalia</taxon>
        <taxon>Eutheria</taxon>
        <taxon>Euarchontoglires</taxon>
        <taxon>Primates</taxon>
        <taxon>Haplorrhini</taxon>
        <taxon>Catarrhini</taxon>
        <taxon>Hominidae</taxon>
        <taxon>Homo</taxon>
    </lineage>
</organism>
<keyword id="KW-0025">Alternative splicing</keyword>
<keyword id="KW-0225">Disease variant</keyword>
<keyword id="KW-1267">Proteomics identification</keyword>
<keyword id="KW-1185">Reference proteome</keyword>
<gene>
    <name type="primary">BTG4</name>
    <name type="synonym">PC3B</name>
</gene>
<comment type="function">
    <text evidence="1 2">Adapter protein that bridges CNOT7, a catalytic subunit of the CCR4-NOT complex, to EIF4E (By similarity). Facilitates maternal mRNAs decay during the maturation of oocytes and in the fertilized egg, and is required for the maternal-zygotic transition (MZT), zygotic cleavage and initiation of embryonic development (PubMed:32502391).</text>
</comment>
<comment type="subunit">
    <text evidence="1 2">Interacts with CNOT7 (PubMed:32502391). Interacts with EIF4E (By similarity). Interacts with CNOT8 (By similarity).</text>
</comment>
<comment type="alternative products">
    <event type="alternative splicing"/>
    <isoform>
        <id>Q9NY30-1</id>
        <name>1</name>
        <sequence type="displayed"/>
    </isoform>
    <isoform>
        <id>Q9NY30-2</id>
        <name>2</name>
        <sequence type="described" ref="VSP_053851"/>
    </isoform>
</comment>
<comment type="tissue specificity">
    <text evidence="2">Expressed in oocytes after germinal vesicle breakdown (PubMed:32502391). Expressed in testis and in olfactory epithelium.</text>
</comment>
<comment type="disease" evidence="2">
    <disease id="DI-05911">
        <name>Oocyte/zygote/embryo maturation arrest 8</name>
        <acronym>OZEMA8</acronym>
        <description>An autosomal recessive infertility disorder due to failure of the fertilized ovum to undergo zygotic cleavage.</description>
        <dbReference type="MIM" id="619009"/>
    </disease>
    <text>The disease is caused by variants affecting the gene represented in this entry.</text>
</comment>
<comment type="similarity">
    <text evidence="4">Belongs to the BTG family.</text>
</comment>
<name>BTG4_HUMAN</name>
<protein>
    <recommendedName>
        <fullName>Protein BTG4</fullName>
    </recommendedName>
    <alternativeName>
        <fullName>BTG family member 4</fullName>
    </alternativeName>
    <alternativeName>
        <fullName>Protein PC3b</fullName>
    </alternativeName>
</protein>
<proteinExistence type="evidence at protein level"/>
<dbReference type="EMBL" id="AJ271351">
    <property type="protein sequence ID" value="CAB69821.1"/>
    <property type="molecule type" value="mRNA"/>
</dbReference>
<dbReference type="EMBL" id="AP002008">
    <property type="status" value="NOT_ANNOTATED_CDS"/>
    <property type="molecule type" value="Genomic_DNA"/>
</dbReference>
<dbReference type="EMBL" id="BC031045">
    <property type="protein sequence ID" value="AAH31045.1"/>
    <property type="molecule type" value="mRNA"/>
</dbReference>
<dbReference type="CCDS" id="CCDS8346.1">
    <molecule id="Q9NY30-1"/>
</dbReference>
<dbReference type="CCDS" id="CCDS91585.1">
    <molecule id="Q9NY30-2"/>
</dbReference>
<dbReference type="RefSeq" id="NP_001354905.1">
    <molecule id="Q9NY30-2"/>
    <property type="nucleotide sequence ID" value="NM_001367976.1"/>
</dbReference>
<dbReference type="RefSeq" id="NP_060059.1">
    <molecule id="Q9NY30-1"/>
    <property type="nucleotide sequence ID" value="NM_017589.4"/>
</dbReference>
<dbReference type="SMR" id="Q9NY30"/>
<dbReference type="BioGRID" id="120141">
    <property type="interactions" value="1"/>
</dbReference>
<dbReference type="FunCoup" id="Q9NY30">
    <property type="interactions" value="116"/>
</dbReference>
<dbReference type="STRING" id="9606.ENSP00000348300"/>
<dbReference type="iPTMnet" id="Q9NY30"/>
<dbReference type="PhosphoSitePlus" id="Q9NY30"/>
<dbReference type="BioMuta" id="BTG4"/>
<dbReference type="DMDM" id="13626142"/>
<dbReference type="MassIVE" id="Q9NY30"/>
<dbReference type="PaxDb" id="9606-ENSP00000348300"/>
<dbReference type="PeptideAtlas" id="Q9NY30"/>
<dbReference type="ProteomicsDB" id="83158">
    <molecule id="Q9NY30-1"/>
</dbReference>
<dbReference type="Antibodypedia" id="32035">
    <property type="antibodies" value="152 antibodies from 23 providers"/>
</dbReference>
<dbReference type="DNASU" id="54766"/>
<dbReference type="Ensembl" id="ENST00000356018.6">
    <molecule id="Q9NY30-1"/>
    <property type="protein sequence ID" value="ENSP00000348300.2"/>
    <property type="gene ID" value="ENSG00000137707.14"/>
</dbReference>
<dbReference type="Ensembl" id="ENST00000525791.5">
    <molecule id="Q9NY30-2"/>
    <property type="protein sequence ID" value="ENSP00000432018.1"/>
    <property type="gene ID" value="ENSG00000137707.14"/>
</dbReference>
<dbReference type="GeneID" id="54766"/>
<dbReference type="KEGG" id="hsa:54766"/>
<dbReference type="UCSC" id="uc001plj.4">
    <molecule id="Q9NY30-1"/>
    <property type="organism name" value="human"/>
</dbReference>
<dbReference type="AGR" id="HGNC:13862"/>
<dbReference type="CTD" id="54766"/>
<dbReference type="DisGeNET" id="54766"/>
<dbReference type="GeneCards" id="BTG4"/>
<dbReference type="HGNC" id="HGNC:13862">
    <property type="gene designation" value="BTG4"/>
</dbReference>
<dbReference type="HPA" id="ENSG00000137707">
    <property type="expression patterns" value="Tissue enriched (testis)"/>
</dbReference>
<dbReference type="MalaCards" id="BTG4"/>
<dbReference type="MIM" id="605673">
    <property type="type" value="gene"/>
</dbReference>
<dbReference type="MIM" id="619009">
    <property type="type" value="phenotype"/>
</dbReference>
<dbReference type="neXtProt" id="NX_Q9NY30"/>
<dbReference type="OpenTargets" id="ENSG00000137707"/>
<dbReference type="PharmGKB" id="PA25453"/>
<dbReference type="VEuPathDB" id="HostDB:ENSG00000137707"/>
<dbReference type="eggNOG" id="KOG4006">
    <property type="taxonomic scope" value="Eukaryota"/>
</dbReference>
<dbReference type="GeneTree" id="ENSGT00950000182952"/>
<dbReference type="HOGENOM" id="CLU_079660_3_0_1"/>
<dbReference type="InParanoid" id="Q9NY30"/>
<dbReference type="OMA" id="YLHRKTY"/>
<dbReference type="OrthoDB" id="19928at2759"/>
<dbReference type="PAN-GO" id="Q9NY30">
    <property type="GO annotations" value="4 GO annotations based on evolutionary models"/>
</dbReference>
<dbReference type="PhylomeDB" id="Q9NY30"/>
<dbReference type="TreeFam" id="TF105272"/>
<dbReference type="PathwayCommons" id="Q9NY30"/>
<dbReference type="Reactome" id="R-HSA-9820841">
    <property type="pathway name" value="M-decay: degradation of maternal mRNAs by maternally stored factors"/>
</dbReference>
<dbReference type="BioGRID-ORCS" id="54766">
    <property type="hits" value="9 hits in 1153 CRISPR screens"/>
</dbReference>
<dbReference type="ChiTaRS" id="BTG4">
    <property type="organism name" value="human"/>
</dbReference>
<dbReference type="GeneWiki" id="BTG4"/>
<dbReference type="GenomeRNAi" id="54766"/>
<dbReference type="Pharos" id="Q9NY30">
    <property type="development level" value="Tbio"/>
</dbReference>
<dbReference type="PRO" id="PR:Q9NY30"/>
<dbReference type="Proteomes" id="UP000005640">
    <property type="component" value="Chromosome 11"/>
</dbReference>
<dbReference type="RNAct" id="Q9NY30">
    <property type="molecule type" value="protein"/>
</dbReference>
<dbReference type="Bgee" id="ENSG00000137707">
    <property type="expression patterns" value="Expressed in oocyte and 47 other cell types or tissues"/>
</dbReference>
<dbReference type="ExpressionAtlas" id="Q9NY30">
    <property type="expression patterns" value="baseline and differential"/>
</dbReference>
<dbReference type="GO" id="GO:0005737">
    <property type="term" value="C:cytoplasm"/>
    <property type="evidence" value="ECO:0000318"/>
    <property type="project" value="GO_Central"/>
</dbReference>
<dbReference type="GO" id="GO:0005634">
    <property type="term" value="C:nucleus"/>
    <property type="evidence" value="ECO:0000318"/>
    <property type="project" value="GO_Central"/>
</dbReference>
<dbReference type="GO" id="GO:0008285">
    <property type="term" value="P:negative regulation of cell population proliferation"/>
    <property type="evidence" value="ECO:0000304"/>
    <property type="project" value="UniProtKB"/>
</dbReference>
<dbReference type="GO" id="GO:0030182">
    <property type="term" value="P:neuron differentiation"/>
    <property type="evidence" value="ECO:0000304"/>
    <property type="project" value="UniProtKB"/>
</dbReference>
<dbReference type="GO" id="GO:0051726">
    <property type="term" value="P:regulation of cell cycle"/>
    <property type="evidence" value="ECO:0000304"/>
    <property type="project" value="UniProtKB"/>
</dbReference>
<dbReference type="FunFam" id="3.90.640.90:FF:000002">
    <property type="entry name" value="BTG anti-proliferation factor 4"/>
    <property type="match status" value="1"/>
</dbReference>
<dbReference type="Gene3D" id="3.90.640.90">
    <property type="entry name" value="Anti-proliferative protein, N-terminal domain"/>
    <property type="match status" value="1"/>
</dbReference>
<dbReference type="InterPro" id="IPR002087">
    <property type="entry name" value="Anti_prolifrtn"/>
</dbReference>
<dbReference type="InterPro" id="IPR033332">
    <property type="entry name" value="BTG"/>
</dbReference>
<dbReference type="InterPro" id="IPR036054">
    <property type="entry name" value="BTG-like_sf"/>
</dbReference>
<dbReference type="PANTHER" id="PTHR22978">
    <property type="entry name" value="B-CELL TRANSLOCATION GENE"/>
    <property type="match status" value="1"/>
</dbReference>
<dbReference type="PANTHER" id="PTHR22978:SF5">
    <property type="entry name" value="PROTEIN BTG4"/>
    <property type="match status" value="1"/>
</dbReference>
<dbReference type="Pfam" id="PF07742">
    <property type="entry name" value="BTG"/>
    <property type="match status" value="1"/>
</dbReference>
<dbReference type="PRINTS" id="PR00310">
    <property type="entry name" value="ANTIPRLFBTG1"/>
</dbReference>
<dbReference type="SMART" id="SM00099">
    <property type="entry name" value="btg1"/>
    <property type="match status" value="1"/>
</dbReference>
<dbReference type="SUPFAM" id="SSF160696">
    <property type="entry name" value="BTG domain-like"/>
    <property type="match status" value="1"/>
</dbReference>
<dbReference type="PROSITE" id="PS00960">
    <property type="entry name" value="BTG_1"/>
    <property type="match status" value="1"/>
</dbReference>
<dbReference type="PROSITE" id="PS01203">
    <property type="entry name" value="BTG_2"/>
    <property type="match status" value="1"/>
</dbReference>
<reference key="1">
    <citation type="journal article" date="2000" name="Genomics">
        <title>Cloning of PC3B, a novel member of the PC3/BTG/TOB family of growth inhibitory genes, highly expressed in the olfactory epithelium.</title>
        <authorList>
            <person name="Buanne P."/>
            <person name="Corrente G."/>
            <person name="Micheli L."/>
            <person name="Palena A."/>
            <person name="Lavia P."/>
            <person name="Spadafora C."/>
            <person name="Lakshmana M.K."/>
            <person name="Rinaldi A."/>
            <person name="Banfi S."/>
            <person name="Quarto M."/>
            <person name="Bulfone A."/>
            <person name="Tirone F."/>
        </authorList>
    </citation>
    <scope>NUCLEOTIDE SEQUENCE [MRNA] (ISOFORM 1)</scope>
    <source>
        <tissue>Testis</tissue>
    </source>
</reference>
<reference key="2">
    <citation type="journal article" date="2006" name="Nature">
        <title>Human chromosome 11 DNA sequence and analysis including novel gene identification.</title>
        <authorList>
            <person name="Taylor T.D."/>
            <person name="Noguchi H."/>
            <person name="Totoki Y."/>
            <person name="Toyoda A."/>
            <person name="Kuroki Y."/>
            <person name="Dewar K."/>
            <person name="Lloyd C."/>
            <person name="Itoh T."/>
            <person name="Takeda T."/>
            <person name="Kim D.-W."/>
            <person name="She X."/>
            <person name="Barlow K.F."/>
            <person name="Bloom T."/>
            <person name="Bruford E."/>
            <person name="Chang J.L."/>
            <person name="Cuomo C.A."/>
            <person name="Eichler E."/>
            <person name="FitzGerald M.G."/>
            <person name="Jaffe D.B."/>
            <person name="LaButti K."/>
            <person name="Nicol R."/>
            <person name="Park H.-S."/>
            <person name="Seaman C."/>
            <person name="Sougnez C."/>
            <person name="Yang X."/>
            <person name="Zimmer A.R."/>
            <person name="Zody M.C."/>
            <person name="Birren B.W."/>
            <person name="Nusbaum C."/>
            <person name="Fujiyama A."/>
            <person name="Hattori M."/>
            <person name="Rogers J."/>
            <person name="Lander E.S."/>
            <person name="Sakaki Y."/>
        </authorList>
    </citation>
    <scope>NUCLEOTIDE SEQUENCE [LARGE SCALE GENOMIC DNA]</scope>
</reference>
<reference key="3">
    <citation type="journal article" date="2004" name="Genome Res.">
        <title>The status, quality, and expansion of the NIH full-length cDNA project: the Mammalian Gene Collection (MGC).</title>
        <authorList>
            <consortium name="The MGC Project Team"/>
        </authorList>
    </citation>
    <scope>NUCLEOTIDE SEQUENCE [LARGE SCALE MRNA] (ISOFORM 2)</scope>
    <source>
        <tissue>Testis</tissue>
    </source>
</reference>
<reference key="4">
    <citation type="journal article" date="2020" name="Am. J. Hum. Genet.">
        <title>Homozygous mutations in BTG4 cause zygotic cleavage failure and female infertility.</title>
        <authorList>
            <person name="Zheng W."/>
            <person name="Zhou Z."/>
            <person name="Sha Q."/>
            <person name="Niu X."/>
            <person name="Sun X."/>
            <person name="Shi J."/>
            <person name="Zhao L."/>
            <person name="Zhang S."/>
            <person name="Dai J."/>
            <person name="Cai S."/>
            <person name="Meng F."/>
            <person name="Hu L."/>
            <person name="Gong F."/>
            <person name="Li X."/>
            <person name="Fu J."/>
            <person name="Shi R."/>
            <person name="Lu G."/>
            <person name="Chen B."/>
            <person name="Fan H."/>
            <person name="Wang L."/>
            <person name="Lin G."/>
            <person name="Sang Q."/>
        </authorList>
    </citation>
    <scope>FUNCTION</scope>
    <scope>TISSUE SPECIFICITY</scope>
    <scope>INTERACTION WITH CNOT7</scope>
    <scope>INVOLVEMENT IN OZEMA8</scope>
    <scope>VARIANTS OZEMA8 25-GLN--LEU-223 DEL AND THR-56</scope>
    <scope>CHARACTERIZATION OF VARIANT OZEMA8 THR-56</scope>
</reference>
<evidence type="ECO:0000250" key="1">
    <source>
        <dbReference type="UniProtKB" id="O70552"/>
    </source>
</evidence>
<evidence type="ECO:0000269" key="2">
    <source>
    </source>
</evidence>
<evidence type="ECO:0000303" key="3">
    <source>
    </source>
</evidence>
<evidence type="ECO:0000305" key="4"/>